<feature type="chain" id="PRO_0000378328" description="Homologous-pairing protein 2 homolog">
    <location>
        <begin position="1"/>
        <end position="226"/>
    </location>
</feature>
<feature type="coiled-coil region" evidence="1">
    <location>
        <begin position="76"/>
        <end position="150"/>
    </location>
</feature>
<sequence length="226" mass="26245">MAPKSDNTEAIVLNFVNEQNKPLNTQNAADALQKFNLKKTAVQKALDSLADAGKITFKEYGKQKIYIARQDQFEIPNSEELAQMKEDNAKLQEQLQEKKKTISDVESEIKSLQSNLTLEEIQEKDAKLRKEVKEMEEKLVKLREGITLVRPEDKKAVEDMYADKINQWRKRKRMFRDIWDTVTENSPKDVKELKEELGIEYDEDVGLSFQAYADLIQHGKKRPRGQ</sequence>
<comment type="function">
    <text>Involved in bivalent formation and segregation of homologous chromosomes in meiosis.</text>
</comment>
<comment type="subunit">
    <text evidence="3 4">Interacts with MND1 and MIP1.</text>
</comment>
<comment type="subcellular location">
    <subcellularLocation>
        <location evidence="2">Nucleus</location>
    </subcellularLocation>
</comment>
<comment type="tissue specificity">
    <text evidence="2">Expressed in vegetative and reproductive tissues. Found in seedlings, leaves and flowers.</text>
</comment>
<comment type="disruption phenotype">
    <text evidence="2">Sterility due to failure of both male and female gametophyte development.</text>
</comment>
<comment type="similarity">
    <text evidence="5">Belongs to the HOP2 family.</text>
</comment>
<proteinExistence type="evidence at protein level"/>
<dbReference type="EMBL" id="AY225519">
    <property type="protein sequence ID" value="AAO67519.1"/>
    <property type="molecule type" value="mRNA"/>
</dbReference>
<dbReference type="EMBL" id="AJ627484">
    <property type="protein sequence ID" value="CAF28783.1"/>
    <property type="molecule type" value="mRNA"/>
</dbReference>
<dbReference type="EMBL" id="AC011810">
    <property type="protein sequence ID" value="AAG09555.1"/>
    <property type="molecule type" value="Genomic_DNA"/>
</dbReference>
<dbReference type="EMBL" id="CP002684">
    <property type="protein sequence ID" value="AEE29001.1"/>
    <property type="molecule type" value="Genomic_DNA"/>
</dbReference>
<dbReference type="EMBL" id="AK176610">
    <property type="protein sequence ID" value="BAD44373.1"/>
    <property type="molecule type" value="mRNA"/>
</dbReference>
<dbReference type="EMBL" id="AK227903">
    <property type="protein sequence ID" value="BAE99873.1"/>
    <property type="molecule type" value="mRNA"/>
</dbReference>
<dbReference type="EMBL" id="BT025172">
    <property type="protein sequence ID" value="ABE77410.1"/>
    <property type="molecule type" value="mRNA"/>
</dbReference>
<dbReference type="PIR" id="A86268">
    <property type="entry name" value="A86268"/>
</dbReference>
<dbReference type="RefSeq" id="NP_172791.1">
    <property type="nucleotide sequence ID" value="NM_101204.3"/>
</dbReference>
<dbReference type="SMR" id="Q9FX64"/>
<dbReference type="BioGRID" id="23133">
    <property type="interactions" value="1"/>
</dbReference>
<dbReference type="FunCoup" id="Q9FX64">
    <property type="interactions" value="2135"/>
</dbReference>
<dbReference type="IntAct" id="Q9FX64">
    <property type="interactions" value="2"/>
</dbReference>
<dbReference type="STRING" id="3702.Q9FX64"/>
<dbReference type="PaxDb" id="3702-AT1G13330.1"/>
<dbReference type="ProteomicsDB" id="230201"/>
<dbReference type="EnsemblPlants" id="AT1G13330.1">
    <property type="protein sequence ID" value="AT1G13330.1"/>
    <property type="gene ID" value="AT1G13330"/>
</dbReference>
<dbReference type="GeneID" id="837893"/>
<dbReference type="Gramene" id="AT1G13330.1">
    <property type="protein sequence ID" value="AT1G13330.1"/>
    <property type="gene ID" value="AT1G13330"/>
</dbReference>
<dbReference type="KEGG" id="ath:AT1G13330"/>
<dbReference type="Araport" id="AT1G13330"/>
<dbReference type="TAIR" id="AT1G13330">
    <property type="gene designation" value="AHP2"/>
</dbReference>
<dbReference type="eggNOG" id="KOG4603">
    <property type="taxonomic scope" value="Eukaryota"/>
</dbReference>
<dbReference type="HOGENOM" id="CLU_063266_0_0_1"/>
<dbReference type="InParanoid" id="Q9FX64"/>
<dbReference type="OMA" id="QKYHREW"/>
<dbReference type="OrthoDB" id="272266at2759"/>
<dbReference type="PhylomeDB" id="Q9FX64"/>
<dbReference type="PRO" id="PR:Q9FX64"/>
<dbReference type="Proteomes" id="UP000006548">
    <property type="component" value="Chromosome 1"/>
</dbReference>
<dbReference type="ExpressionAtlas" id="Q9FX64">
    <property type="expression patterns" value="baseline and differential"/>
</dbReference>
<dbReference type="GO" id="GO:0005634">
    <property type="term" value="C:nucleus"/>
    <property type="evidence" value="ECO:0007669"/>
    <property type="project" value="UniProtKB-SubCell"/>
</dbReference>
<dbReference type="GO" id="GO:0051026">
    <property type="term" value="P:chiasma assembly"/>
    <property type="evidence" value="ECO:0000315"/>
    <property type="project" value="TAIR"/>
</dbReference>
<dbReference type="FunFam" id="1.10.10.10:FF:000394">
    <property type="entry name" value="Homologous-pairing protein 2 homolog"/>
    <property type="match status" value="1"/>
</dbReference>
<dbReference type="Gene3D" id="1.10.10.10">
    <property type="entry name" value="Winged helix-like DNA-binding domain superfamily/Winged helix DNA-binding domain"/>
    <property type="match status" value="1"/>
</dbReference>
<dbReference type="InterPro" id="IPR010776">
    <property type="entry name" value="Hop2_WH_dom"/>
</dbReference>
<dbReference type="InterPro" id="IPR040661">
    <property type="entry name" value="LZ3wCH"/>
</dbReference>
<dbReference type="InterPro" id="IPR036388">
    <property type="entry name" value="WH-like_DNA-bd_sf"/>
</dbReference>
<dbReference type="InterPro" id="IPR036390">
    <property type="entry name" value="WH_DNA-bd_sf"/>
</dbReference>
<dbReference type="PANTHER" id="PTHR15938:SF0">
    <property type="entry name" value="HOMOLOGOUS-PAIRING PROTEIN 2 HOMOLOG"/>
    <property type="match status" value="1"/>
</dbReference>
<dbReference type="PANTHER" id="PTHR15938">
    <property type="entry name" value="TBP-1 INTERACTING PROTEIN"/>
    <property type="match status" value="1"/>
</dbReference>
<dbReference type="Pfam" id="PF18517">
    <property type="entry name" value="LZ3wCH"/>
    <property type="match status" value="1"/>
</dbReference>
<dbReference type="Pfam" id="PF07106">
    <property type="entry name" value="TBPIP"/>
    <property type="match status" value="1"/>
</dbReference>
<dbReference type="SUPFAM" id="SSF46785">
    <property type="entry name" value="Winged helix' DNA-binding domain"/>
    <property type="match status" value="1"/>
</dbReference>
<keyword id="KW-0175">Coiled coil</keyword>
<keyword id="KW-0233">DNA recombination</keyword>
<keyword id="KW-0469">Meiosis</keyword>
<keyword id="KW-0539">Nucleus</keyword>
<keyword id="KW-1185">Reference proteome</keyword>
<protein>
    <recommendedName>
        <fullName>Homologous-pairing protein 2 homolog</fullName>
    </recommendedName>
    <alternativeName>
        <fullName>Protein AHP2</fullName>
        <shortName>AtAHP2</shortName>
    </alternativeName>
    <alternativeName>
        <fullName>Protein ARABIDOPSIS HOMOLOG PAIRING 2</fullName>
    </alternativeName>
    <alternativeName>
        <fullName>Protein HOP2</fullName>
        <shortName>AtHOP2</shortName>
    </alternativeName>
</protein>
<gene>
    <name type="primary">HOP2</name>
    <name type="synonym">AHP2</name>
    <name type="ordered locus">At1g13330</name>
    <name type="ORF">T6J4.9</name>
</gene>
<name>HOP2_ARATH</name>
<reference key="1">
    <citation type="journal article" date="2003" name="Plant J.">
        <title>AHP2 is required for bivalent formation and for segregation of homologous chromosomes in Arabidopsis meiosis.</title>
        <authorList>
            <person name="Schommer C."/>
            <person name="Beven A."/>
            <person name="Lawrenson T."/>
            <person name="Shaw P."/>
            <person name="Sablowski R."/>
        </authorList>
    </citation>
    <scope>NUCLEOTIDE SEQUENCE [MRNA]</scope>
    <scope>SUBCELLULAR LOCATION</scope>
    <scope>TISSUE SPECIFICITY</scope>
    <scope>DISRUPTION PHENOTYPE</scope>
    <source>
        <strain>cv. Landsberg erecta</strain>
    </source>
</reference>
<reference key="2">
    <citation type="submission" date="2004-02" db="EMBL/GenBank/DDBJ databases">
        <title>A study of the Arabidopsis Hop2 gene (AHP2).</title>
        <authorList>
            <person name="Siaud N."/>
            <person name="Doutriaux M.P."/>
        </authorList>
    </citation>
    <scope>NUCLEOTIDE SEQUENCE [MRNA]</scope>
    <source>
        <strain>cv. Landsberg erecta</strain>
        <tissue>Flower bud</tissue>
    </source>
</reference>
<reference key="3">
    <citation type="journal article" date="2000" name="Nature">
        <title>Sequence and analysis of chromosome 1 of the plant Arabidopsis thaliana.</title>
        <authorList>
            <person name="Theologis A."/>
            <person name="Ecker J.R."/>
            <person name="Palm C.J."/>
            <person name="Federspiel N.A."/>
            <person name="Kaul S."/>
            <person name="White O."/>
            <person name="Alonso J."/>
            <person name="Altafi H."/>
            <person name="Araujo R."/>
            <person name="Bowman C.L."/>
            <person name="Brooks S.Y."/>
            <person name="Buehler E."/>
            <person name="Chan A."/>
            <person name="Chao Q."/>
            <person name="Chen H."/>
            <person name="Cheuk R.F."/>
            <person name="Chin C.W."/>
            <person name="Chung M.K."/>
            <person name="Conn L."/>
            <person name="Conway A.B."/>
            <person name="Conway A.R."/>
            <person name="Creasy T.H."/>
            <person name="Dewar K."/>
            <person name="Dunn P."/>
            <person name="Etgu P."/>
            <person name="Feldblyum T.V."/>
            <person name="Feng J.-D."/>
            <person name="Fong B."/>
            <person name="Fujii C.Y."/>
            <person name="Gill J.E."/>
            <person name="Goldsmith A.D."/>
            <person name="Haas B."/>
            <person name="Hansen N.F."/>
            <person name="Hughes B."/>
            <person name="Huizar L."/>
            <person name="Hunter J.L."/>
            <person name="Jenkins J."/>
            <person name="Johnson-Hopson C."/>
            <person name="Khan S."/>
            <person name="Khaykin E."/>
            <person name="Kim C.J."/>
            <person name="Koo H.L."/>
            <person name="Kremenetskaia I."/>
            <person name="Kurtz D.B."/>
            <person name="Kwan A."/>
            <person name="Lam B."/>
            <person name="Langin-Hooper S."/>
            <person name="Lee A."/>
            <person name="Lee J.M."/>
            <person name="Lenz C.A."/>
            <person name="Li J.H."/>
            <person name="Li Y.-P."/>
            <person name="Lin X."/>
            <person name="Liu S.X."/>
            <person name="Liu Z.A."/>
            <person name="Luros J.S."/>
            <person name="Maiti R."/>
            <person name="Marziali A."/>
            <person name="Militscher J."/>
            <person name="Miranda M."/>
            <person name="Nguyen M."/>
            <person name="Nierman W.C."/>
            <person name="Osborne B.I."/>
            <person name="Pai G."/>
            <person name="Peterson J."/>
            <person name="Pham P.K."/>
            <person name="Rizzo M."/>
            <person name="Rooney T."/>
            <person name="Rowley D."/>
            <person name="Sakano H."/>
            <person name="Salzberg S.L."/>
            <person name="Schwartz J.R."/>
            <person name="Shinn P."/>
            <person name="Southwick A.M."/>
            <person name="Sun H."/>
            <person name="Tallon L.J."/>
            <person name="Tambunga G."/>
            <person name="Toriumi M.J."/>
            <person name="Town C.D."/>
            <person name="Utterback T."/>
            <person name="Van Aken S."/>
            <person name="Vaysberg M."/>
            <person name="Vysotskaia V.S."/>
            <person name="Walker M."/>
            <person name="Wu D."/>
            <person name="Yu G."/>
            <person name="Fraser C.M."/>
            <person name="Venter J.C."/>
            <person name="Davis R.W."/>
        </authorList>
    </citation>
    <scope>NUCLEOTIDE SEQUENCE [LARGE SCALE GENOMIC DNA]</scope>
    <source>
        <strain>cv. Columbia</strain>
    </source>
</reference>
<reference key="4">
    <citation type="journal article" date="2017" name="Plant J.">
        <title>Araport11: a complete reannotation of the Arabidopsis thaliana reference genome.</title>
        <authorList>
            <person name="Cheng C.Y."/>
            <person name="Krishnakumar V."/>
            <person name="Chan A.P."/>
            <person name="Thibaud-Nissen F."/>
            <person name="Schobel S."/>
            <person name="Town C.D."/>
        </authorList>
    </citation>
    <scope>GENOME REANNOTATION</scope>
    <source>
        <strain>cv. Columbia</strain>
    </source>
</reference>
<reference key="5">
    <citation type="submission" date="2006-07" db="EMBL/GenBank/DDBJ databases">
        <title>Large-scale analysis of RIKEN Arabidopsis full-length (RAFL) cDNAs.</title>
        <authorList>
            <person name="Totoki Y."/>
            <person name="Seki M."/>
            <person name="Ishida J."/>
            <person name="Nakajima M."/>
            <person name="Enju A."/>
            <person name="Kamiya A."/>
            <person name="Narusaka M."/>
            <person name="Shin-i T."/>
            <person name="Nakagawa M."/>
            <person name="Sakamoto N."/>
            <person name="Oishi K."/>
            <person name="Kohara Y."/>
            <person name="Kobayashi M."/>
            <person name="Toyoda A."/>
            <person name="Sakaki Y."/>
            <person name="Sakurai T."/>
            <person name="Iida K."/>
            <person name="Akiyama K."/>
            <person name="Satou M."/>
            <person name="Toyoda T."/>
            <person name="Konagaya A."/>
            <person name="Carninci P."/>
            <person name="Kawai J."/>
            <person name="Hayashizaki Y."/>
            <person name="Shinozaki K."/>
        </authorList>
    </citation>
    <scope>NUCLEOTIDE SEQUENCE [LARGE SCALE MRNA]</scope>
    <source>
        <strain>cv. Columbia</strain>
    </source>
</reference>
<reference key="6">
    <citation type="submission" date="2006-04" db="EMBL/GenBank/DDBJ databases">
        <title>Arabidopsis ORF clones.</title>
        <authorList>
            <person name="Shinn P."/>
            <person name="Chen H."/>
            <person name="Kim C.J."/>
            <person name="Ecker J.R."/>
        </authorList>
    </citation>
    <scope>NUCLEOTIDE SEQUENCE [LARGE SCALE MRNA]</scope>
    <source>
        <strain>cv. Columbia</strain>
    </source>
</reference>
<reference key="7">
    <citation type="journal article" date="2006" name="J. Cell Sci.">
        <title>The Arabidopsis thaliana MND1 homologue plays a key role in meiotic homologous pairing, synapsis and recombination.</title>
        <authorList>
            <person name="Kerzendorfer C."/>
            <person name="Vignard J."/>
            <person name="Pedrosa-Harand A."/>
            <person name="Siwiec T."/>
            <person name="Akimcheva S."/>
            <person name="Jolivet S."/>
            <person name="Sablowski R."/>
            <person name="Armstrong S."/>
            <person name="Schweizer D."/>
            <person name="Mercier R."/>
            <person name="Schloegelhofer P."/>
        </authorList>
    </citation>
    <scope>INTERACTION WITH MND1</scope>
</reference>
<reference key="8">
    <citation type="journal article" date="2009" name="Plant J.">
        <title>A novel ATM dependant X-ray inducible gene is essential for both plant meiosis and gametogenesis.</title>
        <authorList>
            <person name="Dean P.J."/>
            <person name="Siwiec T."/>
            <person name="Waterworth W.M."/>
            <person name="Schloegelhofer P."/>
            <person name="Armstrong S.J."/>
            <person name="West C.E."/>
        </authorList>
    </citation>
    <scope>INTERACTION WITH MIP1</scope>
</reference>
<accession>Q9FX64</accession>
<evidence type="ECO:0000255" key="1"/>
<evidence type="ECO:0000269" key="2">
    <source>
    </source>
</evidence>
<evidence type="ECO:0000269" key="3">
    <source>
    </source>
</evidence>
<evidence type="ECO:0000269" key="4">
    <source>
    </source>
</evidence>
<evidence type="ECO:0000305" key="5"/>
<organism>
    <name type="scientific">Arabidopsis thaliana</name>
    <name type="common">Mouse-ear cress</name>
    <dbReference type="NCBI Taxonomy" id="3702"/>
    <lineage>
        <taxon>Eukaryota</taxon>
        <taxon>Viridiplantae</taxon>
        <taxon>Streptophyta</taxon>
        <taxon>Embryophyta</taxon>
        <taxon>Tracheophyta</taxon>
        <taxon>Spermatophyta</taxon>
        <taxon>Magnoliopsida</taxon>
        <taxon>eudicotyledons</taxon>
        <taxon>Gunneridae</taxon>
        <taxon>Pentapetalae</taxon>
        <taxon>rosids</taxon>
        <taxon>malvids</taxon>
        <taxon>Brassicales</taxon>
        <taxon>Brassicaceae</taxon>
        <taxon>Camelineae</taxon>
        <taxon>Arabidopsis</taxon>
    </lineage>
</organism>